<feature type="chain" id="PRO_1000051421" description="Asparagine--tRNA ligase">
    <location>
        <begin position="1"/>
        <end position="466"/>
    </location>
</feature>
<dbReference type="EC" id="6.1.1.22" evidence="1"/>
<dbReference type="EMBL" id="CP000753">
    <property type="protein sequence ID" value="ABS08083.1"/>
    <property type="molecule type" value="Genomic_DNA"/>
</dbReference>
<dbReference type="RefSeq" id="WP_012089031.1">
    <property type="nucleotide sequence ID" value="NC_009665.1"/>
</dbReference>
<dbReference type="SMR" id="A6WMP4"/>
<dbReference type="KEGG" id="sbm:Shew185_1940"/>
<dbReference type="HOGENOM" id="CLU_004553_2_0_6"/>
<dbReference type="GO" id="GO:0005737">
    <property type="term" value="C:cytoplasm"/>
    <property type="evidence" value="ECO:0007669"/>
    <property type="project" value="UniProtKB-SubCell"/>
</dbReference>
<dbReference type="GO" id="GO:0004816">
    <property type="term" value="F:asparagine-tRNA ligase activity"/>
    <property type="evidence" value="ECO:0007669"/>
    <property type="project" value="UniProtKB-UniRule"/>
</dbReference>
<dbReference type="GO" id="GO:0005524">
    <property type="term" value="F:ATP binding"/>
    <property type="evidence" value="ECO:0007669"/>
    <property type="project" value="UniProtKB-UniRule"/>
</dbReference>
<dbReference type="GO" id="GO:0003676">
    <property type="term" value="F:nucleic acid binding"/>
    <property type="evidence" value="ECO:0007669"/>
    <property type="project" value="InterPro"/>
</dbReference>
<dbReference type="GO" id="GO:0006421">
    <property type="term" value="P:asparaginyl-tRNA aminoacylation"/>
    <property type="evidence" value="ECO:0007669"/>
    <property type="project" value="UniProtKB-UniRule"/>
</dbReference>
<dbReference type="CDD" id="cd00776">
    <property type="entry name" value="AsxRS_core"/>
    <property type="match status" value="1"/>
</dbReference>
<dbReference type="CDD" id="cd04318">
    <property type="entry name" value="EcAsnRS_like_N"/>
    <property type="match status" value="1"/>
</dbReference>
<dbReference type="FunFam" id="3.30.930.10:FF:000016">
    <property type="entry name" value="Asparagine--tRNA ligase"/>
    <property type="match status" value="1"/>
</dbReference>
<dbReference type="Gene3D" id="3.30.930.10">
    <property type="entry name" value="Bira Bifunctional Protein, Domain 2"/>
    <property type="match status" value="1"/>
</dbReference>
<dbReference type="Gene3D" id="2.40.50.140">
    <property type="entry name" value="Nucleic acid-binding proteins"/>
    <property type="match status" value="1"/>
</dbReference>
<dbReference type="HAMAP" id="MF_00534">
    <property type="entry name" value="Asn_tRNA_synth"/>
    <property type="match status" value="1"/>
</dbReference>
<dbReference type="InterPro" id="IPR004364">
    <property type="entry name" value="Aa-tRNA-synt_II"/>
</dbReference>
<dbReference type="InterPro" id="IPR006195">
    <property type="entry name" value="aa-tRNA-synth_II"/>
</dbReference>
<dbReference type="InterPro" id="IPR045864">
    <property type="entry name" value="aa-tRNA-synth_II/BPL/LPL"/>
</dbReference>
<dbReference type="InterPro" id="IPR004522">
    <property type="entry name" value="Asn-tRNA-ligase"/>
</dbReference>
<dbReference type="InterPro" id="IPR002312">
    <property type="entry name" value="Asp/Asn-tRNA-synth_IIb"/>
</dbReference>
<dbReference type="InterPro" id="IPR012340">
    <property type="entry name" value="NA-bd_OB-fold"/>
</dbReference>
<dbReference type="InterPro" id="IPR004365">
    <property type="entry name" value="NA-bd_OB_tRNA"/>
</dbReference>
<dbReference type="NCBIfam" id="TIGR00457">
    <property type="entry name" value="asnS"/>
    <property type="match status" value="1"/>
</dbReference>
<dbReference type="NCBIfam" id="NF003037">
    <property type="entry name" value="PRK03932.1"/>
    <property type="match status" value="1"/>
</dbReference>
<dbReference type="PANTHER" id="PTHR22594:SF34">
    <property type="entry name" value="ASPARAGINE--TRNA LIGASE, MITOCHONDRIAL-RELATED"/>
    <property type="match status" value="1"/>
</dbReference>
<dbReference type="PANTHER" id="PTHR22594">
    <property type="entry name" value="ASPARTYL/LYSYL-TRNA SYNTHETASE"/>
    <property type="match status" value="1"/>
</dbReference>
<dbReference type="Pfam" id="PF00152">
    <property type="entry name" value="tRNA-synt_2"/>
    <property type="match status" value="1"/>
</dbReference>
<dbReference type="Pfam" id="PF01336">
    <property type="entry name" value="tRNA_anti-codon"/>
    <property type="match status" value="1"/>
</dbReference>
<dbReference type="PRINTS" id="PR01042">
    <property type="entry name" value="TRNASYNTHASP"/>
</dbReference>
<dbReference type="SUPFAM" id="SSF55681">
    <property type="entry name" value="Class II aaRS and biotin synthetases"/>
    <property type="match status" value="1"/>
</dbReference>
<dbReference type="SUPFAM" id="SSF50249">
    <property type="entry name" value="Nucleic acid-binding proteins"/>
    <property type="match status" value="1"/>
</dbReference>
<dbReference type="PROSITE" id="PS50862">
    <property type="entry name" value="AA_TRNA_LIGASE_II"/>
    <property type="match status" value="1"/>
</dbReference>
<comment type="catalytic activity">
    <reaction evidence="1">
        <text>tRNA(Asn) + L-asparagine + ATP = L-asparaginyl-tRNA(Asn) + AMP + diphosphate + H(+)</text>
        <dbReference type="Rhea" id="RHEA:11180"/>
        <dbReference type="Rhea" id="RHEA-COMP:9659"/>
        <dbReference type="Rhea" id="RHEA-COMP:9674"/>
        <dbReference type="ChEBI" id="CHEBI:15378"/>
        <dbReference type="ChEBI" id="CHEBI:30616"/>
        <dbReference type="ChEBI" id="CHEBI:33019"/>
        <dbReference type="ChEBI" id="CHEBI:58048"/>
        <dbReference type="ChEBI" id="CHEBI:78442"/>
        <dbReference type="ChEBI" id="CHEBI:78515"/>
        <dbReference type="ChEBI" id="CHEBI:456215"/>
        <dbReference type="EC" id="6.1.1.22"/>
    </reaction>
</comment>
<comment type="subunit">
    <text evidence="1">Homodimer.</text>
</comment>
<comment type="subcellular location">
    <subcellularLocation>
        <location evidence="1">Cytoplasm</location>
    </subcellularLocation>
</comment>
<comment type="similarity">
    <text evidence="1">Belongs to the class-II aminoacyl-tRNA synthetase family.</text>
</comment>
<protein>
    <recommendedName>
        <fullName evidence="1">Asparagine--tRNA ligase</fullName>
        <ecNumber evidence="1">6.1.1.22</ecNumber>
    </recommendedName>
    <alternativeName>
        <fullName evidence="1">Asparaginyl-tRNA synthetase</fullName>
        <shortName evidence="1">AsnRS</shortName>
    </alternativeName>
</protein>
<accession>A6WMP4</accession>
<proteinExistence type="inferred from homology"/>
<gene>
    <name evidence="1" type="primary">asnS</name>
    <name type="ordered locus">Shew185_1940</name>
</gene>
<keyword id="KW-0030">Aminoacyl-tRNA synthetase</keyword>
<keyword id="KW-0067">ATP-binding</keyword>
<keyword id="KW-0963">Cytoplasm</keyword>
<keyword id="KW-0436">Ligase</keyword>
<keyword id="KW-0547">Nucleotide-binding</keyword>
<keyword id="KW-0648">Protein biosynthesis</keyword>
<name>SYN_SHEB8</name>
<sequence>MSIASVASVFKGEHAVGSKVTVRGWVRTRRDSKAGISFLAVYDGSCFNPIQGVVPNSLDNYDNEVLKLTAGCSVVMTGDVVESPGAGQAFELQVTDIEVAGWVDDPDTYPMAAKRHSIEHLRELAHLRPRTNIIGAVARVRNCLSQAIHRFYHEEGFIWVSTPLITASDCEGAGEMFRVSTLDMENLPRTEAGKVDYDKDFFGKEAFLTVSGQLNAETYACALSKVYTFGPTFRAENSNTSRHLAEFWMVEPEVAFANLNDIAGLAEAMLKYAFNAVLTERMDDLTFFAQHVDKTVIDRLQSFVSSDFAQVDYTDAVEILQNCGRTFEFPVSWGIDLSSEHERYLAEEHFKAPVVVKNYPKDIKAFYMRLNDDGKTVAAMDVLAPGIGEIIGGSQREERLDVLDMRLAEMDLNQEDYWWYRDMRRYGTVPHAGFGLGFERLVSYVTGVNNIRDVIPFPRAPRTANF</sequence>
<evidence type="ECO:0000255" key="1">
    <source>
        <dbReference type="HAMAP-Rule" id="MF_00534"/>
    </source>
</evidence>
<reference key="1">
    <citation type="submission" date="2007-07" db="EMBL/GenBank/DDBJ databases">
        <title>Complete sequence of chromosome of Shewanella baltica OS185.</title>
        <authorList>
            <consortium name="US DOE Joint Genome Institute"/>
            <person name="Copeland A."/>
            <person name="Lucas S."/>
            <person name="Lapidus A."/>
            <person name="Barry K."/>
            <person name="Glavina del Rio T."/>
            <person name="Dalin E."/>
            <person name="Tice H."/>
            <person name="Pitluck S."/>
            <person name="Sims D."/>
            <person name="Brettin T."/>
            <person name="Bruce D."/>
            <person name="Detter J.C."/>
            <person name="Han C."/>
            <person name="Schmutz J."/>
            <person name="Larimer F."/>
            <person name="Land M."/>
            <person name="Hauser L."/>
            <person name="Kyrpides N."/>
            <person name="Mikhailova N."/>
            <person name="Brettar I."/>
            <person name="Rodrigues J."/>
            <person name="Konstantinidis K."/>
            <person name="Tiedje J."/>
            <person name="Richardson P."/>
        </authorList>
    </citation>
    <scope>NUCLEOTIDE SEQUENCE [LARGE SCALE GENOMIC DNA]</scope>
    <source>
        <strain>OS185</strain>
    </source>
</reference>
<organism>
    <name type="scientific">Shewanella baltica (strain OS185)</name>
    <dbReference type="NCBI Taxonomy" id="402882"/>
    <lineage>
        <taxon>Bacteria</taxon>
        <taxon>Pseudomonadati</taxon>
        <taxon>Pseudomonadota</taxon>
        <taxon>Gammaproteobacteria</taxon>
        <taxon>Alteromonadales</taxon>
        <taxon>Shewanellaceae</taxon>
        <taxon>Shewanella</taxon>
    </lineage>
</organism>